<accession>A0RVY3</accession>
<keyword id="KW-1185">Reference proteome</keyword>
<keyword id="KW-0687">Ribonucleoprotein</keyword>
<keyword id="KW-0689">Ribosomal protein</keyword>
<keyword id="KW-0694">RNA-binding</keyword>
<keyword id="KW-0699">rRNA-binding</keyword>
<dbReference type="EMBL" id="DP000238">
    <property type="protein sequence ID" value="ABK77500.1"/>
    <property type="molecule type" value="Genomic_DNA"/>
</dbReference>
<dbReference type="SMR" id="A0RVY3"/>
<dbReference type="STRING" id="414004.CENSYa_0867"/>
<dbReference type="EnsemblBacteria" id="ABK77500">
    <property type="protein sequence ID" value="ABK77500"/>
    <property type="gene ID" value="CENSYa_0867"/>
</dbReference>
<dbReference type="KEGG" id="csy:CENSYa_0867"/>
<dbReference type="PATRIC" id="fig|414004.10.peg.801"/>
<dbReference type="HOGENOM" id="CLU_095071_3_0_2"/>
<dbReference type="Proteomes" id="UP000000758">
    <property type="component" value="Chromosome"/>
</dbReference>
<dbReference type="GO" id="GO:0022625">
    <property type="term" value="C:cytosolic large ribosomal subunit"/>
    <property type="evidence" value="ECO:0007669"/>
    <property type="project" value="TreeGrafter"/>
</dbReference>
<dbReference type="GO" id="GO:0070180">
    <property type="term" value="F:large ribosomal subunit rRNA binding"/>
    <property type="evidence" value="ECO:0007669"/>
    <property type="project" value="TreeGrafter"/>
</dbReference>
<dbReference type="GO" id="GO:0003735">
    <property type="term" value="F:structural constituent of ribosome"/>
    <property type="evidence" value="ECO:0007669"/>
    <property type="project" value="InterPro"/>
</dbReference>
<dbReference type="GO" id="GO:0006412">
    <property type="term" value="P:translation"/>
    <property type="evidence" value="ECO:0007669"/>
    <property type="project" value="UniProtKB-UniRule"/>
</dbReference>
<dbReference type="CDD" id="cd00337">
    <property type="entry name" value="Ribosomal_uL14"/>
    <property type="match status" value="1"/>
</dbReference>
<dbReference type="FunFam" id="2.40.150.20:FF:000007">
    <property type="entry name" value="50S ribosomal protein L14"/>
    <property type="match status" value="1"/>
</dbReference>
<dbReference type="Gene3D" id="2.40.150.20">
    <property type="entry name" value="Ribosomal protein L14"/>
    <property type="match status" value="1"/>
</dbReference>
<dbReference type="HAMAP" id="MF_01367">
    <property type="entry name" value="Ribosomal_uL14"/>
    <property type="match status" value="1"/>
</dbReference>
<dbReference type="InterPro" id="IPR000218">
    <property type="entry name" value="Ribosomal_uL14"/>
</dbReference>
<dbReference type="InterPro" id="IPR019972">
    <property type="entry name" value="Ribosomal_uL14_CS"/>
</dbReference>
<dbReference type="InterPro" id="IPR036853">
    <property type="entry name" value="Ribosomal_uL14_sf"/>
</dbReference>
<dbReference type="NCBIfam" id="NF006344">
    <property type="entry name" value="PRK08571.1"/>
    <property type="match status" value="1"/>
</dbReference>
<dbReference type="PANTHER" id="PTHR11761">
    <property type="entry name" value="50S/60S RIBOSOMAL PROTEIN L14/L23"/>
    <property type="match status" value="1"/>
</dbReference>
<dbReference type="PANTHER" id="PTHR11761:SF8">
    <property type="entry name" value="LARGE RIBOSOMAL SUBUNIT PROTEIN UL14"/>
    <property type="match status" value="1"/>
</dbReference>
<dbReference type="Pfam" id="PF00238">
    <property type="entry name" value="Ribosomal_L14"/>
    <property type="match status" value="1"/>
</dbReference>
<dbReference type="SMART" id="SM01374">
    <property type="entry name" value="Ribosomal_L14"/>
    <property type="match status" value="1"/>
</dbReference>
<dbReference type="SUPFAM" id="SSF50193">
    <property type="entry name" value="Ribosomal protein L14"/>
    <property type="match status" value="1"/>
</dbReference>
<dbReference type="PROSITE" id="PS00049">
    <property type="entry name" value="RIBOSOMAL_L14"/>
    <property type="match status" value="1"/>
</dbReference>
<protein>
    <recommendedName>
        <fullName evidence="1">Large ribosomal subunit protein uL14</fullName>
    </recommendedName>
    <alternativeName>
        <fullName evidence="2">50S ribosomal protein L14</fullName>
    </alternativeName>
</protein>
<comment type="function">
    <text evidence="1">Binds to 23S rRNA. Forms part of two intersubunit bridges in the 70S ribosome.</text>
</comment>
<comment type="subunit">
    <text evidence="1">Part of the 50S ribosomal subunit. Forms a cluster with proteins L3 and L24e, part of which may contact the 16S rRNA in 2 intersubunit bridges.</text>
</comment>
<comment type="similarity">
    <text evidence="1">Belongs to the universal ribosomal protein uL14 family.</text>
</comment>
<organism>
    <name type="scientific">Cenarchaeum symbiosum (strain A)</name>
    <dbReference type="NCBI Taxonomy" id="414004"/>
    <lineage>
        <taxon>Archaea</taxon>
        <taxon>Nitrososphaerota</taxon>
        <taxon>Candidatus Cenarchaeales</taxon>
        <taxon>Candidatus Cenarchaeaceae</taxon>
        <taxon>Candidatus Cenarchaeum</taxon>
    </lineage>
</organism>
<evidence type="ECO:0000255" key="1">
    <source>
        <dbReference type="HAMAP-Rule" id="MF_01367"/>
    </source>
</evidence>
<evidence type="ECO:0000305" key="2"/>
<gene>
    <name evidence="1" type="primary">rpl14</name>
    <name type="ordered locus">CENSYa_0867</name>
</gene>
<proteinExistence type="inferred from homology"/>
<feature type="chain" id="PRO_0000355847" description="Large ribosomal subunit protein uL14">
    <location>
        <begin position="1"/>
        <end position="144"/>
    </location>
</feature>
<reference key="1">
    <citation type="journal article" date="2006" name="Proc. Natl. Acad. Sci. U.S.A.">
        <title>Genomic analysis of the uncultivated marine crenarchaeote Cenarchaeum symbiosum.</title>
        <authorList>
            <person name="Hallam S.J."/>
            <person name="Konstantinidis K.T."/>
            <person name="Putnam N."/>
            <person name="Schleper C."/>
            <person name="Watanabe Y."/>
            <person name="Sugahara J."/>
            <person name="Preston C."/>
            <person name="de la Torre J."/>
            <person name="Richardson P.M."/>
            <person name="DeLong E.F."/>
        </authorList>
    </citation>
    <scope>NUCLEOTIDE SEQUENCE [LARGE SCALE GENOMIC DNA]</scope>
    <source>
        <strain>A</strain>
    </source>
</reference>
<sequence length="144" mass="15521">MSQGRSRGKAKGVEEFRPYVTRALPVGARVTCADNSGAKVLEIIMVQKAKTRVSRLPAAAVGDYVNVVVKKGPAELRKQVHGAVIIRQKYPVRRLNGVRVAFEDNAAVLTTPEGEMKGTDIKGPVAAEASEKWPRLANLASMVV</sequence>
<name>RL14_CENSY</name>